<gene>
    <name evidence="1" type="primary">tsaD</name>
    <name type="synonym">gcp</name>
    <name type="ordered locus">Mflv_4929</name>
</gene>
<evidence type="ECO:0000255" key="1">
    <source>
        <dbReference type="HAMAP-Rule" id="MF_01445"/>
    </source>
</evidence>
<dbReference type="EC" id="2.3.1.234" evidence="1"/>
<dbReference type="EMBL" id="CP000656">
    <property type="protein sequence ID" value="ABP47395.1"/>
    <property type="molecule type" value="Genomic_DNA"/>
</dbReference>
<dbReference type="SMR" id="A4TEN0"/>
<dbReference type="STRING" id="350054.Mflv_4929"/>
<dbReference type="KEGG" id="mgi:Mflv_4929"/>
<dbReference type="eggNOG" id="COG0533">
    <property type="taxonomic scope" value="Bacteria"/>
</dbReference>
<dbReference type="HOGENOM" id="CLU_023208_0_2_11"/>
<dbReference type="OrthoDB" id="9806197at2"/>
<dbReference type="GO" id="GO:0005737">
    <property type="term" value="C:cytoplasm"/>
    <property type="evidence" value="ECO:0007669"/>
    <property type="project" value="UniProtKB-SubCell"/>
</dbReference>
<dbReference type="GO" id="GO:0005506">
    <property type="term" value="F:iron ion binding"/>
    <property type="evidence" value="ECO:0007669"/>
    <property type="project" value="UniProtKB-UniRule"/>
</dbReference>
<dbReference type="GO" id="GO:0061711">
    <property type="term" value="F:N(6)-L-threonylcarbamoyladenine synthase activity"/>
    <property type="evidence" value="ECO:0007669"/>
    <property type="project" value="UniProtKB-EC"/>
</dbReference>
<dbReference type="GO" id="GO:0002949">
    <property type="term" value="P:tRNA threonylcarbamoyladenosine modification"/>
    <property type="evidence" value="ECO:0007669"/>
    <property type="project" value="UniProtKB-UniRule"/>
</dbReference>
<dbReference type="CDD" id="cd24133">
    <property type="entry name" value="ASKHA_NBD_TsaD_bac"/>
    <property type="match status" value="1"/>
</dbReference>
<dbReference type="FunFam" id="3.30.420.40:FF:000012">
    <property type="entry name" value="tRNA N6-adenosine threonylcarbamoyltransferase"/>
    <property type="match status" value="1"/>
</dbReference>
<dbReference type="FunFam" id="3.30.420.40:FF:000040">
    <property type="entry name" value="tRNA N6-adenosine threonylcarbamoyltransferase"/>
    <property type="match status" value="1"/>
</dbReference>
<dbReference type="Gene3D" id="3.30.420.40">
    <property type="match status" value="2"/>
</dbReference>
<dbReference type="HAMAP" id="MF_01445">
    <property type="entry name" value="TsaD"/>
    <property type="match status" value="1"/>
</dbReference>
<dbReference type="InterPro" id="IPR043129">
    <property type="entry name" value="ATPase_NBD"/>
</dbReference>
<dbReference type="InterPro" id="IPR000905">
    <property type="entry name" value="Gcp-like_dom"/>
</dbReference>
<dbReference type="InterPro" id="IPR017861">
    <property type="entry name" value="KAE1/TsaD"/>
</dbReference>
<dbReference type="InterPro" id="IPR017860">
    <property type="entry name" value="Peptidase_M22_CS"/>
</dbReference>
<dbReference type="InterPro" id="IPR022450">
    <property type="entry name" value="TsaD"/>
</dbReference>
<dbReference type="NCBIfam" id="TIGR00329">
    <property type="entry name" value="gcp_kae1"/>
    <property type="match status" value="1"/>
</dbReference>
<dbReference type="NCBIfam" id="TIGR03723">
    <property type="entry name" value="T6A_TsaD_YgjD"/>
    <property type="match status" value="1"/>
</dbReference>
<dbReference type="PANTHER" id="PTHR11735">
    <property type="entry name" value="TRNA N6-ADENOSINE THREONYLCARBAMOYLTRANSFERASE"/>
    <property type="match status" value="1"/>
</dbReference>
<dbReference type="PANTHER" id="PTHR11735:SF6">
    <property type="entry name" value="TRNA N6-ADENOSINE THREONYLCARBAMOYLTRANSFERASE, MITOCHONDRIAL"/>
    <property type="match status" value="1"/>
</dbReference>
<dbReference type="Pfam" id="PF00814">
    <property type="entry name" value="TsaD"/>
    <property type="match status" value="1"/>
</dbReference>
<dbReference type="PRINTS" id="PR00789">
    <property type="entry name" value="OSIALOPTASE"/>
</dbReference>
<dbReference type="SUPFAM" id="SSF53067">
    <property type="entry name" value="Actin-like ATPase domain"/>
    <property type="match status" value="1"/>
</dbReference>
<dbReference type="PROSITE" id="PS01016">
    <property type="entry name" value="GLYCOPROTEASE"/>
    <property type="match status" value="1"/>
</dbReference>
<feature type="chain" id="PRO_1000087481" description="tRNA N6-adenosine threonylcarbamoyltransferase">
    <location>
        <begin position="1"/>
        <end position="340"/>
    </location>
</feature>
<feature type="binding site" evidence="1">
    <location>
        <position position="113"/>
    </location>
    <ligand>
        <name>Fe cation</name>
        <dbReference type="ChEBI" id="CHEBI:24875"/>
    </ligand>
</feature>
<feature type="binding site" evidence="1">
    <location>
        <position position="117"/>
    </location>
    <ligand>
        <name>Fe cation</name>
        <dbReference type="ChEBI" id="CHEBI:24875"/>
    </ligand>
</feature>
<feature type="binding site" evidence="1">
    <location>
        <begin position="135"/>
        <end position="139"/>
    </location>
    <ligand>
        <name>substrate</name>
    </ligand>
</feature>
<feature type="binding site" evidence="1">
    <location>
        <position position="169"/>
    </location>
    <ligand>
        <name>substrate</name>
    </ligand>
</feature>
<feature type="binding site" evidence="1">
    <location>
        <position position="182"/>
    </location>
    <ligand>
        <name>substrate</name>
    </ligand>
</feature>
<feature type="binding site" evidence="1">
    <location>
        <position position="186"/>
    </location>
    <ligand>
        <name>substrate</name>
    </ligand>
</feature>
<feature type="binding site" evidence="1">
    <location>
        <position position="274"/>
    </location>
    <ligand>
        <name>substrate</name>
    </ligand>
</feature>
<feature type="binding site" evidence="1">
    <location>
        <position position="302"/>
    </location>
    <ligand>
        <name>Fe cation</name>
        <dbReference type="ChEBI" id="CHEBI:24875"/>
    </ligand>
</feature>
<organism>
    <name type="scientific">Mycolicibacterium gilvum (strain PYR-GCK)</name>
    <name type="common">Mycobacterium gilvum (strain PYR-GCK)</name>
    <dbReference type="NCBI Taxonomy" id="350054"/>
    <lineage>
        <taxon>Bacteria</taxon>
        <taxon>Bacillati</taxon>
        <taxon>Actinomycetota</taxon>
        <taxon>Actinomycetes</taxon>
        <taxon>Mycobacteriales</taxon>
        <taxon>Mycobacteriaceae</taxon>
        <taxon>Mycolicibacterium</taxon>
    </lineage>
</organism>
<accession>A4TEN0</accession>
<proteinExistence type="inferred from homology"/>
<keyword id="KW-0012">Acyltransferase</keyword>
<keyword id="KW-0963">Cytoplasm</keyword>
<keyword id="KW-0408">Iron</keyword>
<keyword id="KW-0479">Metal-binding</keyword>
<keyword id="KW-0808">Transferase</keyword>
<keyword id="KW-0819">tRNA processing</keyword>
<comment type="function">
    <text evidence="1">Required for the formation of a threonylcarbamoyl group on adenosine at position 37 (t(6)A37) in tRNAs that read codons beginning with adenine. Is involved in the transfer of the threonylcarbamoyl moiety of threonylcarbamoyl-AMP (TC-AMP) to the N6 group of A37, together with TsaE and TsaB. TsaD likely plays a direct catalytic role in this reaction.</text>
</comment>
<comment type="catalytic activity">
    <reaction evidence="1">
        <text>L-threonylcarbamoyladenylate + adenosine(37) in tRNA = N(6)-L-threonylcarbamoyladenosine(37) in tRNA + AMP + H(+)</text>
        <dbReference type="Rhea" id="RHEA:37059"/>
        <dbReference type="Rhea" id="RHEA-COMP:10162"/>
        <dbReference type="Rhea" id="RHEA-COMP:10163"/>
        <dbReference type="ChEBI" id="CHEBI:15378"/>
        <dbReference type="ChEBI" id="CHEBI:73682"/>
        <dbReference type="ChEBI" id="CHEBI:74411"/>
        <dbReference type="ChEBI" id="CHEBI:74418"/>
        <dbReference type="ChEBI" id="CHEBI:456215"/>
        <dbReference type="EC" id="2.3.1.234"/>
    </reaction>
</comment>
<comment type="cofactor">
    <cofactor evidence="1">
        <name>Fe(2+)</name>
        <dbReference type="ChEBI" id="CHEBI:29033"/>
    </cofactor>
    <text evidence="1">Binds 1 Fe(2+) ion per subunit.</text>
</comment>
<comment type="subcellular location">
    <subcellularLocation>
        <location evidence="1">Cytoplasm</location>
    </subcellularLocation>
</comment>
<comment type="similarity">
    <text evidence="1">Belongs to the KAE1 / TsaD family.</text>
</comment>
<reference key="1">
    <citation type="submission" date="2007-04" db="EMBL/GenBank/DDBJ databases">
        <title>Complete sequence of chromosome of Mycobacterium gilvum PYR-GCK.</title>
        <authorList>
            <consortium name="US DOE Joint Genome Institute"/>
            <person name="Copeland A."/>
            <person name="Lucas S."/>
            <person name="Lapidus A."/>
            <person name="Barry K."/>
            <person name="Detter J.C."/>
            <person name="Glavina del Rio T."/>
            <person name="Hammon N."/>
            <person name="Israni S."/>
            <person name="Dalin E."/>
            <person name="Tice H."/>
            <person name="Pitluck S."/>
            <person name="Chain P."/>
            <person name="Malfatti S."/>
            <person name="Shin M."/>
            <person name="Vergez L."/>
            <person name="Schmutz J."/>
            <person name="Larimer F."/>
            <person name="Land M."/>
            <person name="Hauser L."/>
            <person name="Kyrpides N."/>
            <person name="Mikhailova N."/>
            <person name="Miller C."/>
            <person name="Richardson P."/>
        </authorList>
    </citation>
    <scope>NUCLEOTIDE SEQUENCE [LARGE SCALE GENOMIC DNA]</scope>
    <source>
        <strain>PYR-GCK</strain>
    </source>
</reference>
<name>TSAD_MYCGI</name>
<sequence>MIILAIESSCDETGVGIAELGDDGSVTLLADEVASSVDEHARFGGVVPEIASRAHLEALGPTMRRALATAGVDKPDVVAATIGPGLAGALLVGVAAAKAYAAAWQVPFYAVNHLGGHLAADVFDHGPLPESIGLLVSGGHTHLLHVRSLGEPIIELGSTVDDAAGEAYDKIARLLGLGYPGGRVLDELAREGDPKAITFPRGMTGPRDEPYAFSFSGLKTAVARYVESHPEASQADVAAGFQEAVADVLTAKAVRAAGDLGVSTLLIAGGVAANSRLRELAAQRCEAAGMTLRIPRPRLCTDNGAMIASFAAHLIAAGAAPSPLDAASDPGLPVVQGQVA</sequence>
<protein>
    <recommendedName>
        <fullName evidence="1">tRNA N6-adenosine threonylcarbamoyltransferase</fullName>
        <ecNumber evidence="1">2.3.1.234</ecNumber>
    </recommendedName>
    <alternativeName>
        <fullName evidence="1">N6-L-threonylcarbamoyladenine synthase</fullName>
        <shortName evidence="1">t(6)A synthase</shortName>
    </alternativeName>
    <alternativeName>
        <fullName evidence="1">t(6)A37 threonylcarbamoyladenosine biosynthesis protein TsaD</fullName>
    </alternativeName>
    <alternativeName>
        <fullName evidence="1">tRNA threonylcarbamoyladenosine biosynthesis protein TsaD</fullName>
    </alternativeName>
</protein>